<evidence type="ECO:0000255" key="1"/>
<evidence type="ECO:0000269" key="2">
    <source>
    </source>
</evidence>
<evidence type="ECO:0000303" key="3">
    <source>
    </source>
</evidence>
<evidence type="ECO:0000305" key="4"/>
<evidence type="ECO:0000305" key="5">
    <source>
    </source>
</evidence>
<evidence type="ECO:0000312" key="6">
    <source>
        <dbReference type="EMBL" id="ABO09054.1"/>
    </source>
</evidence>
<reference key="1">
    <citation type="submission" date="2007-02" db="EMBL/GenBank/DDBJ databases">
        <title>Complete sequence of Pyrobaculum calidifontis JCM 11548.</title>
        <authorList>
            <consortium name="US DOE Joint Genome Institute"/>
            <person name="Copeland A."/>
            <person name="Lucas S."/>
            <person name="Lapidus A."/>
            <person name="Barry K."/>
            <person name="Glavina del Rio T."/>
            <person name="Dalin E."/>
            <person name="Tice H."/>
            <person name="Pitluck S."/>
            <person name="Chain P."/>
            <person name="Malfatti S."/>
            <person name="Shin M."/>
            <person name="Vergez L."/>
            <person name="Schmutz J."/>
            <person name="Larimer F."/>
            <person name="Land M."/>
            <person name="Hauser L."/>
            <person name="Kyrpides N."/>
            <person name="Mikhailova N."/>
            <person name="Cozen A.E."/>
            <person name="Fitz-Gibbon S.T."/>
            <person name="House C.H."/>
            <person name="Saltikov C."/>
            <person name="Lowe T.M."/>
            <person name="Richardson P."/>
        </authorList>
    </citation>
    <scope>NUCLEOTIDE SEQUENCE [LARGE SCALE GENOMIC DNA]</scope>
    <source>
        <strain>DSM 21063 / JCM 11548 / VA1</strain>
    </source>
</reference>
<reference key="2">
    <citation type="journal article" date="2011" name="Mol. Microbiol.">
        <title>An actin-based cytoskeleton in archaea.</title>
        <authorList>
            <person name="Ettema T.J."/>
            <person name="Lindaas A.C."/>
            <person name="Bernander R."/>
        </authorList>
    </citation>
    <scope>FUNCTION</scope>
    <scope>SUBCELLULAR LOCATION</scope>
</reference>
<proteinExistence type="predicted"/>
<name>RKD4_PYRCJ</name>
<dbReference type="EMBL" id="CP000561">
    <property type="protein sequence ID" value="ABO09054.1"/>
    <property type="molecule type" value="Genomic_DNA"/>
</dbReference>
<dbReference type="RefSeq" id="WP_011850313.1">
    <property type="nucleotide sequence ID" value="NC_009073.1"/>
</dbReference>
<dbReference type="STRING" id="410359.Pcal_1637"/>
<dbReference type="GeneID" id="4908528"/>
<dbReference type="KEGG" id="pcl:Pcal_1637"/>
<dbReference type="eggNOG" id="arCOG00368">
    <property type="taxonomic scope" value="Archaea"/>
</dbReference>
<dbReference type="HOGENOM" id="CLU_004785_0_2_2"/>
<dbReference type="OrthoDB" id="25344at2157"/>
<dbReference type="Proteomes" id="UP000001431">
    <property type="component" value="Chromosome"/>
</dbReference>
<dbReference type="GO" id="GO:0005737">
    <property type="term" value="C:cytoplasm"/>
    <property type="evidence" value="ECO:0007669"/>
    <property type="project" value="UniProtKB-KW"/>
</dbReference>
<dbReference type="GO" id="GO:0005856">
    <property type="term" value="C:cytoskeleton"/>
    <property type="evidence" value="ECO:0007669"/>
    <property type="project" value="UniProtKB-SubCell"/>
</dbReference>
<dbReference type="GO" id="GO:0016887">
    <property type="term" value="F:ATP hydrolysis activity"/>
    <property type="evidence" value="ECO:0007669"/>
    <property type="project" value="InterPro"/>
</dbReference>
<dbReference type="GO" id="GO:0006302">
    <property type="term" value="P:double-strand break repair"/>
    <property type="evidence" value="ECO:0007669"/>
    <property type="project" value="InterPro"/>
</dbReference>
<dbReference type="Gene3D" id="1.10.287.510">
    <property type="entry name" value="Helix hairpin bin"/>
    <property type="match status" value="1"/>
</dbReference>
<dbReference type="Gene3D" id="3.40.50.300">
    <property type="entry name" value="P-loop containing nucleotide triphosphate hydrolases"/>
    <property type="match status" value="2"/>
</dbReference>
<dbReference type="InterPro" id="IPR027417">
    <property type="entry name" value="P-loop_NTPase"/>
</dbReference>
<dbReference type="InterPro" id="IPR038729">
    <property type="entry name" value="Rad50/SbcC_AAA"/>
</dbReference>
<dbReference type="PANTHER" id="PTHR32114">
    <property type="entry name" value="ABC TRANSPORTER ABCH.3"/>
    <property type="match status" value="1"/>
</dbReference>
<dbReference type="PANTHER" id="PTHR32114:SF2">
    <property type="entry name" value="ABC TRANSPORTER ABCH.3"/>
    <property type="match status" value="1"/>
</dbReference>
<dbReference type="Pfam" id="PF13476">
    <property type="entry name" value="AAA_23"/>
    <property type="match status" value="1"/>
</dbReference>
<dbReference type="SUPFAM" id="SSF52540">
    <property type="entry name" value="P-loop containing nucleoside triphosphate hydrolases"/>
    <property type="match status" value="1"/>
</dbReference>
<dbReference type="SUPFAM" id="SSF75712">
    <property type="entry name" value="Rad50 coiled-coil Zn hook"/>
    <property type="match status" value="1"/>
</dbReference>
<accession>A3MWN7</accession>
<organism>
    <name type="scientific">Pyrobaculum calidifontis (strain DSM 21063 / JCM 11548 / VA1)</name>
    <dbReference type="NCBI Taxonomy" id="410359"/>
    <lineage>
        <taxon>Archaea</taxon>
        <taxon>Thermoproteota</taxon>
        <taxon>Thermoprotei</taxon>
        <taxon>Thermoproteales</taxon>
        <taxon>Thermoproteaceae</taxon>
        <taxon>Pyrobaculum</taxon>
    </lineage>
</organism>
<gene>
    <name evidence="3" type="primary">rkd-4</name>
    <name evidence="6" type="ordered locus">Pcal_1637</name>
</gene>
<feature type="chain" id="PRO_0000439075" description="Arcadin-4">
    <location>
        <begin position="1"/>
        <end position="795"/>
    </location>
</feature>
<feature type="coiled-coil region" evidence="1">
    <location>
        <begin position="205"/>
        <end position="253"/>
    </location>
</feature>
<feature type="coiled-coil region" evidence="1">
    <location>
        <begin position="323"/>
        <end position="412"/>
    </location>
</feature>
<feature type="coiled-coil region" evidence="1">
    <location>
        <begin position="450"/>
        <end position="618"/>
    </location>
</feature>
<protein>
    <recommendedName>
        <fullName evidence="3">Arcadin-4</fullName>
    </recommendedName>
</protein>
<keyword id="KW-0175">Coiled coil</keyword>
<keyword id="KW-0963">Cytoplasm</keyword>
<keyword id="KW-0206">Cytoskeleton</keyword>
<comment type="function">
    <text evidence="2">Part of an actin-like archaeal cytoskeleton.</text>
</comment>
<comment type="subcellular location">
    <subcellularLocation>
        <location evidence="4">Cytoplasm</location>
        <location evidence="4">Cytoskeleton</location>
    </subcellularLocation>
    <text evidence="2">Forms cell-spanning helical structures.</text>
</comment>
<comment type="miscellaneous">
    <text evidence="5">Belongs to a conserved five-gene operon within Thermoproteales denoted Arcade (actin-related cytoskeleton in Archaea involved in shape determination).</text>
</comment>
<sequence>MWRISRVELENFRSYRGAHRLELGDVNLLWGRIGAGKTSVFYAIEYALFGQQLEVKERVAKLADLIHSGSHEARVALELVDGANVLKVERKLGKRGAEKLVVVHNGVELRGGEAERRLEELLGVDEDLYERLVYISHRTLEGFIYGTSQKRAISVDRLFGIDVIDGVVKTVSSAEKALLGKAEELRKRLAAYEKYRDVIKRYGGYSGLVSRLRALSSEIEALKEREAMLTRTVEELARARAAYLAKLKEHEQILLEYYRARSELEFLESSAGGEVDVGALEKVKAALREAAEEFEHMLDPGILEKLYKASDLEALSVAMAEVYDALTRVAKDLELELTDVKKAYEEYVARARRLEEEVAAAEARLRRLEKPFLRFQELLKKLRSLEEARARLSEARRRLSEAEREAAYYTSLKTVALYLAETNASVCPICGSPISREAVEKVVRDIDEKFGGVVKRVEELREEVKALEREVEEMEILQGDAAEYIAAKARLDELKVEREEVVKKVLQAEKSVRQLEKRIEKLREFFAKVDKRVISDAVSRYGRAVRIRELRKRVKELEERLRQAGIGGEELEVEVKWREAAAELEKAAARLAELYKEKSLLEEAAREVGEEAEGLKKRLDNVLYAYGRLEELKSRLELAKVSARARLVEVVRSRFNEVFQSLYKYGDVVKVDAAVEPSRGYYDFYAISPSGDRYGVSRLSDGQRLSIALSLALALREISQVKLGFLIFDEPIPYVDVNVRKAFAQLLTSLAGRYQLLVATQSREFAEEVREALPNAKLFTVVKDGASALIEGLQS</sequence>